<name>DNAA_MYCTO</name>
<feature type="chain" id="PRO_0000427057" description="Chromosomal replication initiator protein DnaA">
    <location>
        <begin position="1"/>
        <end position="507"/>
    </location>
</feature>
<feature type="region of interest" description="Domain I, interacts with DnaA modulators" evidence="1">
    <location>
        <begin position="1"/>
        <end position="112"/>
    </location>
</feature>
<feature type="region of interest" description="Disordered" evidence="2">
    <location>
        <begin position="99"/>
        <end position="155"/>
    </location>
</feature>
<feature type="region of interest" description="Domain II" evidence="1">
    <location>
        <begin position="113"/>
        <end position="166"/>
    </location>
</feature>
<feature type="region of interest" description="Domain III, AAA+ region" evidence="1">
    <location>
        <begin position="167"/>
        <end position="383"/>
    </location>
</feature>
<feature type="region of interest" description="Domain IV, binds dsDNA" evidence="1">
    <location>
        <begin position="384"/>
        <end position="507"/>
    </location>
</feature>
<feature type="compositionally biased region" description="Polar residues" evidence="2">
    <location>
        <begin position="113"/>
        <end position="127"/>
    </location>
</feature>
<feature type="binding site" evidence="1">
    <location>
        <position position="211"/>
    </location>
    <ligand>
        <name>ATP</name>
        <dbReference type="ChEBI" id="CHEBI:30616"/>
    </ligand>
</feature>
<feature type="binding site" evidence="1">
    <location>
        <position position="213"/>
    </location>
    <ligand>
        <name>ATP</name>
        <dbReference type="ChEBI" id="CHEBI:30616"/>
    </ligand>
</feature>
<feature type="binding site" evidence="1">
    <location>
        <position position="214"/>
    </location>
    <ligand>
        <name>ATP</name>
        <dbReference type="ChEBI" id="CHEBI:30616"/>
    </ligand>
</feature>
<feature type="binding site" evidence="1">
    <location>
        <position position="215"/>
    </location>
    <ligand>
        <name>ATP</name>
        <dbReference type="ChEBI" id="CHEBI:30616"/>
    </ligand>
</feature>
<dbReference type="EMBL" id="AE000516">
    <property type="protein sequence ID" value="AAK44224.1"/>
    <property type="molecule type" value="Genomic_DNA"/>
</dbReference>
<dbReference type="PIR" id="S70982">
    <property type="entry name" value="S70982"/>
</dbReference>
<dbReference type="RefSeq" id="WP_003400253.1">
    <property type="nucleotide sequence ID" value="NZ_KK341227.1"/>
</dbReference>
<dbReference type="SMR" id="P9WNW2"/>
<dbReference type="GeneID" id="45423958"/>
<dbReference type="KEGG" id="mtc:MT0001"/>
<dbReference type="PATRIC" id="fig|83331.31.peg.1"/>
<dbReference type="HOGENOM" id="CLU_026910_2_0_11"/>
<dbReference type="Proteomes" id="UP000001020">
    <property type="component" value="Chromosome"/>
</dbReference>
<dbReference type="GO" id="GO:0005737">
    <property type="term" value="C:cytoplasm"/>
    <property type="evidence" value="ECO:0007669"/>
    <property type="project" value="UniProtKB-SubCell"/>
</dbReference>
<dbReference type="GO" id="GO:0005886">
    <property type="term" value="C:plasma membrane"/>
    <property type="evidence" value="ECO:0007669"/>
    <property type="project" value="TreeGrafter"/>
</dbReference>
<dbReference type="GO" id="GO:0005524">
    <property type="term" value="F:ATP binding"/>
    <property type="evidence" value="ECO:0007669"/>
    <property type="project" value="UniProtKB-UniRule"/>
</dbReference>
<dbReference type="GO" id="GO:0016887">
    <property type="term" value="F:ATP hydrolysis activity"/>
    <property type="evidence" value="ECO:0007669"/>
    <property type="project" value="InterPro"/>
</dbReference>
<dbReference type="GO" id="GO:0003688">
    <property type="term" value="F:DNA replication origin binding"/>
    <property type="evidence" value="ECO:0007669"/>
    <property type="project" value="UniProtKB-UniRule"/>
</dbReference>
<dbReference type="GO" id="GO:0008289">
    <property type="term" value="F:lipid binding"/>
    <property type="evidence" value="ECO:0007669"/>
    <property type="project" value="UniProtKB-KW"/>
</dbReference>
<dbReference type="GO" id="GO:0006270">
    <property type="term" value="P:DNA replication initiation"/>
    <property type="evidence" value="ECO:0007669"/>
    <property type="project" value="UniProtKB-UniRule"/>
</dbReference>
<dbReference type="GO" id="GO:0006275">
    <property type="term" value="P:regulation of DNA replication"/>
    <property type="evidence" value="ECO:0007669"/>
    <property type="project" value="UniProtKB-UniRule"/>
</dbReference>
<dbReference type="CDD" id="cd00009">
    <property type="entry name" value="AAA"/>
    <property type="match status" value="1"/>
</dbReference>
<dbReference type="CDD" id="cd06571">
    <property type="entry name" value="Bac_DnaA_C"/>
    <property type="match status" value="1"/>
</dbReference>
<dbReference type="FunFam" id="1.10.1750.10:FF:000002">
    <property type="entry name" value="Chromosomal replication initiator protein DnaA"/>
    <property type="match status" value="1"/>
</dbReference>
<dbReference type="FunFam" id="1.10.8.60:FF:000003">
    <property type="entry name" value="Chromosomal replication initiator protein DnaA"/>
    <property type="match status" value="1"/>
</dbReference>
<dbReference type="FunFam" id="3.40.50.300:FF:000150">
    <property type="entry name" value="Chromosomal replication initiator protein DnaA"/>
    <property type="match status" value="1"/>
</dbReference>
<dbReference type="Gene3D" id="1.10.1750.10">
    <property type="match status" value="1"/>
</dbReference>
<dbReference type="Gene3D" id="1.10.8.60">
    <property type="match status" value="1"/>
</dbReference>
<dbReference type="Gene3D" id="3.30.300.180">
    <property type="match status" value="1"/>
</dbReference>
<dbReference type="Gene3D" id="3.40.50.300">
    <property type="entry name" value="P-loop containing nucleotide triphosphate hydrolases"/>
    <property type="match status" value="1"/>
</dbReference>
<dbReference type="HAMAP" id="MF_00377">
    <property type="entry name" value="DnaA_bact"/>
    <property type="match status" value="1"/>
</dbReference>
<dbReference type="InterPro" id="IPR003593">
    <property type="entry name" value="AAA+_ATPase"/>
</dbReference>
<dbReference type="InterPro" id="IPR001957">
    <property type="entry name" value="Chromosome_initiator_DnaA"/>
</dbReference>
<dbReference type="InterPro" id="IPR020591">
    <property type="entry name" value="Chromosome_initiator_DnaA-like"/>
</dbReference>
<dbReference type="InterPro" id="IPR018312">
    <property type="entry name" value="Chromosome_initiator_DnaA_CS"/>
</dbReference>
<dbReference type="InterPro" id="IPR013159">
    <property type="entry name" value="DnaA_C"/>
</dbReference>
<dbReference type="InterPro" id="IPR013317">
    <property type="entry name" value="DnaA_dom"/>
</dbReference>
<dbReference type="InterPro" id="IPR038454">
    <property type="entry name" value="DnaA_N_sf"/>
</dbReference>
<dbReference type="InterPro" id="IPR027417">
    <property type="entry name" value="P-loop_NTPase"/>
</dbReference>
<dbReference type="InterPro" id="IPR010921">
    <property type="entry name" value="Trp_repressor/repl_initiator"/>
</dbReference>
<dbReference type="NCBIfam" id="TIGR00362">
    <property type="entry name" value="DnaA"/>
    <property type="match status" value="1"/>
</dbReference>
<dbReference type="NCBIfam" id="NF010686">
    <property type="entry name" value="PRK14086.1"/>
    <property type="match status" value="1"/>
</dbReference>
<dbReference type="PANTHER" id="PTHR30050">
    <property type="entry name" value="CHROMOSOMAL REPLICATION INITIATOR PROTEIN DNAA"/>
    <property type="match status" value="1"/>
</dbReference>
<dbReference type="PANTHER" id="PTHR30050:SF2">
    <property type="entry name" value="CHROMOSOMAL REPLICATION INITIATOR PROTEIN DNAA"/>
    <property type="match status" value="1"/>
</dbReference>
<dbReference type="Pfam" id="PF00308">
    <property type="entry name" value="Bac_DnaA"/>
    <property type="match status" value="1"/>
</dbReference>
<dbReference type="Pfam" id="PF08299">
    <property type="entry name" value="Bac_DnaA_C"/>
    <property type="match status" value="1"/>
</dbReference>
<dbReference type="PRINTS" id="PR00051">
    <property type="entry name" value="DNAA"/>
</dbReference>
<dbReference type="SMART" id="SM00382">
    <property type="entry name" value="AAA"/>
    <property type="match status" value="1"/>
</dbReference>
<dbReference type="SMART" id="SM00760">
    <property type="entry name" value="Bac_DnaA_C"/>
    <property type="match status" value="1"/>
</dbReference>
<dbReference type="SUPFAM" id="SSF52540">
    <property type="entry name" value="P-loop containing nucleoside triphosphate hydrolases"/>
    <property type="match status" value="1"/>
</dbReference>
<dbReference type="SUPFAM" id="SSF48295">
    <property type="entry name" value="TrpR-like"/>
    <property type="match status" value="1"/>
</dbReference>
<dbReference type="PROSITE" id="PS01008">
    <property type="entry name" value="DNAA"/>
    <property type="match status" value="1"/>
</dbReference>
<gene>
    <name evidence="1" type="primary">dnaA</name>
    <name type="ordered locus">MT0001</name>
</gene>
<sequence>MTDDPGSGFTTVWNAVVSELNGDPKVDDGPSSDANLSAPLTPQQRAWLNLVQPLTIVEGFALLSVPSSFVQNEIERHLRAPITDALSRRLGHQIQLGVRIAPPATDEADDTTVPPSENPATTSPDTTTDNDEIDDSAAARGDNQHSWPSYFTERPHNTDSATAGVTSLNRRYTFDTFVIGASNRFAHAAALAIAEAPARAYNPLFIWGESGLGKTHLLHAAGNYAQRLFPGMRVKYVSTEEFTNDFINSLRDDRKVAFKRSYRDVDVLLVDDIQFIEGKEGIQEEFFHTFNTLHNANKQIVISSDRPPKQLATLEDRLRTRFEWGLITDVQPPELETRIAILRKKAQMERLAVPDDVLELIASSIERNIRELEGALIRVTAFASLNKTPIDKALAEIVLRDLIADANTMQISAATIMAATAEYFDTTVEELRGPGKTRALAQSRQIAMYLCRELTDLSLPKIGQAFGRDHTTVMYAQRKILSEMAERREVFDHVKELTTRIRQRSKR</sequence>
<reference key="1">
    <citation type="journal article" date="2002" name="J. Bacteriol.">
        <title>Whole-genome comparison of Mycobacterium tuberculosis clinical and laboratory strains.</title>
        <authorList>
            <person name="Fleischmann R.D."/>
            <person name="Alland D."/>
            <person name="Eisen J.A."/>
            <person name="Carpenter L."/>
            <person name="White O."/>
            <person name="Peterson J.D."/>
            <person name="DeBoy R.T."/>
            <person name="Dodson R.J."/>
            <person name="Gwinn M.L."/>
            <person name="Haft D.H."/>
            <person name="Hickey E.K."/>
            <person name="Kolonay J.F."/>
            <person name="Nelson W.C."/>
            <person name="Umayam L.A."/>
            <person name="Ermolaeva M.D."/>
            <person name="Salzberg S.L."/>
            <person name="Delcher A."/>
            <person name="Utterback T.R."/>
            <person name="Weidman J.F."/>
            <person name="Khouri H.M."/>
            <person name="Gill J."/>
            <person name="Mikula A."/>
            <person name="Bishai W."/>
            <person name="Jacobs W.R. Jr."/>
            <person name="Venter J.C."/>
            <person name="Fraser C.M."/>
        </authorList>
    </citation>
    <scope>NUCLEOTIDE SEQUENCE [LARGE SCALE GENOMIC DNA]</scope>
    <source>
        <strain>CDC 1551 / Oshkosh</strain>
    </source>
</reference>
<proteinExistence type="inferred from homology"/>
<accession>P9WNW2</accession>
<accession>L0T412</accession>
<accession>P49993</accession>
<accession>P95309</accession>
<accession>Q59585</accession>
<comment type="function">
    <text evidence="1">Plays an essential role in the initiation and regulation of chromosomal replication. ATP-DnaA binds to the origin of replication (oriC) to initiate formation of the DNA replication initiation complex once per cell cycle. Binds the DnaA box (a 9 base pair repeat at the origin) and separates the double-stranded (ds)DNA. Forms a right-handed helical filament on oriC DNA; dsDNA binds to the exterior of the filament while single-stranded (ss)DNA is stabiized in the filament's interior. The ATP-DnaA-oriC complex binds and stabilizes one strand of the AT-rich DNA unwinding element (DUE), permitting loading of DNA polymerase. After initiation quickly degrades to an ADP-DnaA complex that is not apt for DNA replication. Binds acidic phospholipids.</text>
</comment>
<comment type="subunit">
    <text evidence="1">Oligomerizes as a right-handed, spiral filament on DNA at oriC.</text>
</comment>
<comment type="subcellular location">
    <subcellularLocation>
        <location evidence="1">Cytoplasm</location>
    </subcellularLocation>
</comment>
<comment type="domain">
    <text evidence="1">Domain I is involved in oligomerization and binding regulators, domain II is flexibile and of varying length in different bacteria, domain III forms the AAA+ region, while domain IV binds dsDNA.</text>
</comment>
<comment type="similarity">
    <text evidence="1">Belongs to the DnaA family.</text>
</comment>
<protein>
    <recommendedName>
        <fullName evidence="1">Chromosomal replication initiator protein DnaA</fullName>
    </recommendedName>
</protein>
<keyword id="KW-0067">ATP-binding</keyword>
<keyword id="KW-0963">Cytoplasm</keyword>
<keyword id="KW-0235">DNA replication</keyword>
<keyword id="KW-0238">DNA-binding</keyword>
<keyword id="KW-0446">Lipid-binding</keyword>
<keyword id="KW-0547">Nucleotide-binding</keyword>
<keyword id="KW-1185">Reference proteome</keyword>
<evidence type="ECO:0000255" key="1">
    <source>
        <dbReference type="HAMAP-Rule" id="MF_00377"/>
    </source>
</evidence>
<evidence type="ECO:0000256" key="2">
    <source>
        <dbReference type="SAM" id="MobiDB-lite"/>
    </source>
</evidence>
<organism>
    <name type="scientific">Mycobacterium tuberculosis (strain CDC 1551 / Oshkosh)</name>
    <dbReference type="NCBI Taxonomy" id="83331"/>
    <lineage>
        <taxon>Bacteria</taxon>
        <taxon>Bacillati</taxon>
        <taxon>Actinomycetota</taxon>
        <taxon>Actinomycetes</taxon>
        <taxon>Mycobacteriales</taxon>
        <taxon>Mycobacteriaceae</taxon>
        <taxon>Mycobacterium</taxon>
        <taxon>Mycobacterium tuberculosis complex</taxon>
    </lineage>
</organism>